<reference key="1">
    <citation type="submission" date="2005-07" db="EMBL/GenBank/DDBJ databases">
        <title>Analysis of gene expression in cynomolgus monkey tissues by macaque cDNA oligo-chips.</title>
        <authorList>
            <person name="Kobayashi M."/>
            <person name="Tanuma R."/>
            <person name="Hirata M."/>
            <person name="Osada N."/>
            <person name="Kusuda J."/>
            <person name="Sugano S."/>
            <person name="Hashimoto K."/>
        </authorList>
    </citation>
    <scope>NUCLEOTIDE SEQUENCE [LARGE SCALE MRNA]</scope>
    <source>
        <tissue>Brain cortex</tissue>
    </source>
</reference>
<comment type="subcellular location">
    <subcellularLocation>
        <location evidence="4">Membrane</location>
        <topology evidence="4">Multi-pass membrane protein</topology>
    </subcellularLocation>
</comment>
<comment type="similarity">
    <text evidence="4">Belongs to the ST7 family.</text>
</comment>
<keyword id="KW-0472">Membrane</keyword>
<keyword id="KW-0597">Phosphoprotein</keyword>
<keyword id="KW-1185">Reference proteome</keyword>
<keyword id="KW-0812">Transmembrane</keyword>
<keyword id="KW-1133">Transmembrane helix</keyword>
<sequence>MFGTESSLSMFLNTLTPKFYVALTGTSSLISGLILIFEWWYFRKYGTSFIEQVSVSHLRPLLGGVDNNSSNNSNSSNGDSDSNRQSVSECKVWRNPLNLFRGAEYNRYTWVTGREPLTYYDMNLSAQDHQTFFTCDSDHLRPADAIMQKAWRERNPQARISAAHEALEINEIRSRVEVPLIASSTIWEIKLLPKCATAYILLAEEEATTIAEAEKLFKQALKAGDGCYRRSQQLQHHGSQYEAQHRRDTNVLVYIKRRLAMCARRLGRTREAVKMMRDLMKEFPLLSMFNIHENLLEALLELQAYADVQAVLAKYDDISLPKSATICYTAALLKARAVSDKFSPEAASRRGLSTAEMNAVEAIHRAVEFNPHVPKYLLEMKSLILPPEHILKRGDSEAIAYAFFHLAHWKRVEGALNLLHCTWEGTFRMIPYPLEKGHLFYPYPICTETADRELLPSFHEVSVYPKKELPFFILFTAGLCSFTAMLALLTHQFPELMGVFAKAFLSTLFAPLNFVMEKVESILPSSLWHQLTRI</sequence>
<feature type="chain" id="PRO_0000339205" description="Suppressor of tumorigenicity 7 protein">
    <location>
        <begin position="1"/>
        <end position="534"/>
    </location>
</feature>
<feature type="transmembrane region" description="Helical" evidence="2">
    <location>
        <begin position="19"/>
        <end position="39"/>
    </location>
</feature>
<feature type="transmembrane region" description="Helical" evidence="2">
    <location>
        <begin position="469"/>
        <end position="489"/>
    </location>
</feature>
<feature type="transmembrane region" description="Helical" evidence="2">
    <location>
        <begin position="496"/>
        <end position="516"/>
    </location>
</feature>
<feature type="region of interest" description="Disordered" evidence="3">
    <location>
        <begin position="66"/>
        <end position="85"/>
    </location>
</feature>
<feature type="compositionally biased region" description="Low complexity" evidence="3">
    <location>
        <begin position="66"/>
        <end position="80"/>
    </location>
</feature>
<feature type="modified residue" description="Phosphoserine" evidence="1">
    <location>
        <position position="343"/>
    </location>
</feature>
<protein>
    <recommendedName>
        <fullName>Suppressor of tumorigenicity 7 protein</fullName>
    </recommendedName>
</protein>
<name>ST7_MACFA</name>
<organism>
    <name type="scientific">Macaca fascicularis</name>
    <name type="common">Crab-eating macaque</name>
    <name type="synonym">Cynomolgus monkey</name>
    <dbReference type="NCBI Taxonomy" id="9541"/>
    <lineage>
        <taxon>Eukaryota</taxon>
        <taxon>Metazoa</taxon>
        <taxon>Chordata</taxon>
        <taxon>Craniata</taxon>
        <taxon>Vertebrata</taxon>
        <taxon>Euteleostomi</taxon>
        <taxon>Mammalia</taxon>
        <taxon>Eutheria</taxon>
        <taxon>Euarchontoglires</taxon>
        <taxon>Primates</taxon>
        <taxon>Haplorrhini</taxon>
        <taxon>Catarrhini</taxon>
        <taxon>Cercopithecidae</taxon>
        <taxon>Cercopithecinae</taxon>
        <taxon>Macaca</taxon>
    </lineage>
</organism>
<evidence type="ECO:0000250" key="1">
    <source>
        <dbReference type="UniProtKB" id="Q9NRC1"/>
    </source>
</evidence>
<evidence type="ECO:0000255" key="2"/>
<evidence type="ECO:0000256" key="3">
    <source>
        <dbReference type="SAM" id="MobiDB-lite"/>
    </source>
</evidence>
<evidence type="ECO:0000305" key="4"/>
<gene>
    <name type="primary">ST7</name>
</gene>
<accession>Q2PG42</accession>
<proteinExistence type="evidence at transcript level"/>
<dbReference type="EMBL" id="AB220395">
    <property type="protein sequence ID" value="BAE72928.1"/>
    <property type="molecule type" value="mRNA"/>
</dbReference>
<dbReference type="RefSeq" id="XP_005550648.1">
    <property type="nucleotide sequence ID" value="XM_005550591.4"/>
</dbReference>
<dbReference type="Ensembl" id="ENSMFAT00000062836.2">
    <property type="protein sequence ID" value="ENSMFAP00000013318.2"/>
    <property type="gene ID" value="ENSMFAG00000008568.2"/>
</dbReference>
<dbReference type="GeneID" id="102124299"/>
<dbReference type="KEGG" id="mcf:102124299"/>
<dbReference type="CTD" id="7982"/>
<dbReference type="eggNOG" id="KOG3807">
    <property type="taxonomic scope" value="Eukaryota"/>
</dbReference>
<dbReference type="GeneTree" id="ENSGT00390000000873"/>
<dbReference type="Proteomes" id="UP000233100">
    <property type="component" value="Chromosome 3"/>
</dbReference>
<dbReference type="Bgee" id="ENSMFAG00000008568">
    <property type="expression patterns" value="Expressed in cerebellum and 13 other cell types or tissues"/>
</dbReference>
<dbReference type="GO" id="GO:0016020">
    <property type="term" value="C:membrane"/>
    <property type="evidence" value="ECO:0007669"/>
    <property type="project" value="UniProtKB-SubCell"/>
</dbReference>
<dbReference type="CDD" id="cd11557">
    <property type="entry name" value="ST7"/>
    <property type="match status" value="1"/>
</dbReference>
<dbReference type="InterPro" id="IPR007311">
    <property type="entry name" value="ST7"/>
</dbReference>
<dbReference type="PANTHER" id="PTHR12745">
    <property type="entry name" value="SUPPRESSION OF TUMORIGENICITY 7"/>
    <property type="match status" value="1"/>
</dbReference>
<dbReference type="PANTHER" id="PTHR12745:SF8">
    <property type="entry name" value="SUPPRESSOR OF TUMORIGENICITY 7 PROTEIN"/>
    <property type="match status" value="1"/>
</dbReference>
<dbReference type="Pfam" id="PF04184">
    <property type="entry name" value="ST7"/>
    <property type="match status" value="1"/>
</dbReference>